<feature type="signal peptide" evidence="1">
    <location>
        <begin position="1"/>
        <end position="27"/>
    </location>
</feature>
<feature type="chain" id="PRO_0000011788" description="Beta-glucanase">
    <location>
        <begin position="28"/>
        <end position="243"/>
    </location>
</feature>
<feature type="domain" description="GH16" evidence="2">
    <location>
        <begin position="29"/>
        <end position="243"/>
    </location>
</feature>
<feature type="active site" description="Nucleophile">
    <location>
        <position position="134"/>
    </location>
</feature>
<feature type="active site" description="Proton donor">
    <location>
        <position position="138"/>
    </location>
</feature>
<feature type="disulfide bond" evidence="3">
    <location>
        <begin position="61"/>
        <end position="90"/>
    </location>
</feature>
<feature type="mutagenesis site" description="30% of wild-type activity.">
    <original>D</original>
    <variation>N</variation>
    <location>
        <position position="51"/>
    </location>
</feature>
<feature type="mutagenesis site" description="85% of wild-type activity.">
    <original>D</original>
    <variation>N</variation>
    <location>
        <position position="89"/>
    </location>
</feature>
<feature type="mutagenesis site" description="3% of wild-type activity.">
    <original>E</original>
    <variation>Q</variation>
    <location>
        <position position="92"/>
    </location>
</feature>
<feature type="mutagenesis site" description="50% of wild-type activity.">
    <original>E</original>
    <variation>Q</variation>
    <location>
        <position position="105"/>
    </location>
</feature>
<feature type="mutagenesis site" description="15% of wild-type activity.">
    <original>D</original>
    <variation>N</variation>
    <location>
        <position position="133"/>
    </location>
</feature>
<feature type="mutagenesis site" description="0.2% of wild-type activity.">
    <original>E</original>
    <variation>Q</variation>
    <location>
        <position position="134"/>
    </location>
</feature>
<feature type="mutagenesis site" description="0.5% of wild-type activity.">
    <original>D</original>
    <variation>N</variation>
    <location>
        <position position="136"/>
    </location>
</feature>
<feature type="mutagenesis site" description="Complete loss of activity.">
    <original>E</original>
    <variation>Q</variation>
    <location>
        <position position="138"/>
    </location>
</feature>
<feature type="mutagenesis site" description="65% of wild-type activity.">
    <original>D</original>
    <variation>N</variation>
    <location>
        <position position="143"/>
    </location>
</feature>
<feature type="mutagenesis site" description="15% of wild-type activity.">
    <original>E</original>
    <variation>Q</variation>
    <location>
        <position position="160"/>
    </location>
</feature>
<feature type="mutagenesis site" description="60% of wild-type activity.">
    <original>D</original>
    <variation>N</variation>
    <location>
        <position position="168"/>
    </location>
</feature>
<feature type="mutagenesis site" description="80% of wild-type activity.">
    <original>D</original>
    <variation>N</variation>
    <location>
        <position position="179"/>
    </location>
</feature>
<feature type="mutagenesis site" description="70% of wild-type activity.">
    <original>D</original>
    <variation>N</variation>
    <location>
        <position position="190"/>
    </location>
</feature>
<feature type="mutagenesis site" description="No change in activity.">
    <original>D</original>
    <variation>N</variation>
    <location>
        <position position="219"/>
    </location>
</feature>
<feature type="sequence conflict" description="In Ref. 5." evidence="4" ref="5">
    <original>S</original>
    <variation>Y</variation>
    <location>
        <position position="232"/>
    </location>
</feature>
<feature type="strand" evidence="5">
    <location>
        <begin position="35"/>
        <end position="37"/>
    </location>
</feature>
<feature type="turn" evidence="5">
    <location>
        <begin position="44"/>
        <end position="46"/>
    </location>
</feature>
<feature type="strand" evidence="5">
    <location>
        <begin position="47"/>
        <end position="49"/>
    </location>
</feature>
<feature type="strand" evidence="5">
    <location>
        <begin position="61"/>
        <end position="63"/>
    </location>
</feature>
<feature type="helix" evidence="5">
    <location>
        <begin position="65"/>
        <end position="67"/>
    </location>
</feature>
<feature type="strand" evidence="5">
    <location>
        <begin position="68"/>
        <end position="70"/>
    </location>
</feature>
<feature type="strand" evidence="5">
    <location>
        <begin position="76"/>
        <end position="84"/>
    </location>
</feature>
<feature type="strand" evidence="5">
    <location>
        <begin position="87"/>
        <end position="97"/>
    </location>
</feature>
<feature type="strand" evidence="5">
    <location>
        <begin position="101"/>
        <end position="109"/>
    </location>
</feature>
<feature type="strand" evidence="5">
    <location>
        <begin position="116"/>
        <end position="124"/>
    </location>
</feature>
<feature type="helix" evidence="5">
    <location>
        <begin position="126"/>
        <end position="128"/>
    </location>
</feature>
<feature type="strand" evidence="5">
    <location>
        <begin position="133"/>
        <end position="140"/>
    </location>
</feature>
<feature type="strand" evidence="5">
    <location>
        <begin position="146"/>
        <end position="153"/>
    </location>
</feature>
<feature type="strand" evidence="5">
    <location>
        <begin position="161"/>
        <end position="164"/>
    </location>
</feature>
<feature type="turn" evidence="5">
    <location>
        <begin position="169"/>
        <end position="171"/>
    </location>
</feature>
<feature type="strand" evidence="5">
    <location>
        <begin position="174"/>
        <end position="181"/>
    </location>
</feature>
<feature type="strand" evidence="5">
    <location>
        <begin position="184"/>
        <end position="189"/>
    </location>
</feature>
<feature type="strand" evidence="5">
    <location>
        <begin position="192"/>
        <end position="197"/>
    </location>
</feature>
<feature type="strand" evidence="5">
    <location>
        <begin position="206"/>
        <end position="217"/>
    </location>
</feature>
<feature type="helix" evidence="5">
    <location>
        <begin position="219"/>
        <end position="222"/>
    </location>
</feature>
<feature type="strand" evidence="5">
    <location>
        <begin position="231"/>
        <end position="242"/>
    </location>
</feature>
<dbReference type="EC" id="3.2.1.73"/>
<dbReference type="EMBL" id="X57279">
    <property type="protein sequence ID" value="CAA40547.1"/>
    <property type="molecule type" value="Genomic_DNA"/>
</dbReference>
<dbReference type="PIR" id="S15388">
    <property type="entry name" value="S15388"/>
</dbReference>
<dbReference type="PDB" id="1GBG">
    <property type="method" value="X-ray"/>
    <property type="resolution" value="1.80 A"/>
    <property type="chains" value="A=30-243"/>
</dbReference>
<dbReference type="PDB" id="3D6E">
    <property type="method" value="X-ray"/>
    <property type="resolution" value="2.40 A"/>
    <property type="chains" value="A/B=30-243"/>
</dbReference>
<dbReference type="PDBsum" id="1GBG"/>
<dbReference type="PDBsum" id="3D6E"/>
<dbReference type="SMR" id="P27051"/>
<dbReference type="CAZy" id="GH16">
    <property type="family name" value="Glycoside Hydrolase Family 16"/>
</dbReference>
<dbReference type="BRENDA" id="3.2.1.73">
    <property type="organism ID" value="669"/>
</dbReference>
<dbReference type="SABIO-RK" id="P27051"/>
<dbReference type="EvolutionaryTrace" id="P27051"/>
<dbReference type="GO" id="GO:0042972">
    <property type="term" value="F:licheninase activity"/>
    <property type="evidence" value="ECO:0007669"/>
    <property type="project" value="UniProtKB-EC"/>
</dbReference>
<dbReference type="GO" id="GO:0005975">
    <property type="term" value="P:carbohydrate metabolic process"/>
    <property type="evidence" value="ECO:0007669"/>
    <property type="project" value="InterPro"/>
</dbReference>
<dbReference type="CDD" id="cd02175">
    <property type="entry name" value="GH16_lichenase"/>
    <property type="match status" value="1"/>
</dbReference>
<dbReference type="Gene3D" id="2.60.120.200">
    <property type="match status" value="1"/>
</dbReference>
<dbReference type="InterPro" id="IPR044791">
    <property type="entry name" value="Beta-glucanase/XTH"/>
</dbReference>
<dbReference type="InterPro" id="IPR008264">
    <property type="entry name" value="Beta_glucanase"/>
</dbReference>
<dbReference type="InterPro" id="IPR013320">
    <property type="entry name" value="ConA-like_dom_sf"/>
</dbReference>
<dbReference type="InterPro" id="IPR000757">
    <property type="entry name" value="GH16"/>
</dbReference>
<dbReference type="InterPro" id="IPR008263">
    <property type="entry name" value="GH16_AS"/>
</dbReference>
<dbReference type="NCBIfam" id="NF047856">
    <property type="entry name" value="BGlucanaseBglS"/>
    <property type="match status" value="1"/>
</dbReference>
<dbReference type="PANTHER" id="PTHR31062">
    <property type="entry name" value="XYLOGLUCAN ENDOTRANSGLUCOSYLASE/HYDROLASE PROTEIN 8-RELATED"/>
    <property type="match status" value="1"/>
</dbReference>
<dbReference type="Pfam" id="PF00722">
    <property type="entry name" value="Glyco_hydro_16"/>
    <property type="match status" value="1"/>
</dbReference>
<dbReference type="PRINTS" id="PR00737">
    <property type="entry name" value="GLHYDRLASE16"/>
</dbReference>
<dbReference type="SUPFAM" id="SSF49899">
    <property type="entry name" value="Concanavalin A-like lectins/glucanases"/>
    <property type="match status" value="1"/>
</dbReference>
<dbReference type="PROSITE" id="PS01034">
    <property type="entry name" value="GH16_1"/>
    <property type="match status" value="1"/>
</dbReference>
<dbReference type="PROSITE" id="PS51762">
    <property type="entry name" value="GH16_2"/>
    <property type="match status" value="1"/>
</dbReference>
<protein>
    <recommendedName>
        <fullName>Beta-glucanase</fullName>
        <ecNumber>3.2.1.73</ecNumber>
    </recommendedName>
    <alternativeName>
        <fullName>1,3-1,4-beta-D-glucan 4-glucanohydrolase</fullName>
    </alternativeName>
    <alternativeName>
        <fullName>Endo-beta-1,3-1,4 glucanase</fullName>
    </alternativeName>
    <alternativeName>
        <fullName>Lichenase</fullName>
    </alternativeName>
</protein>
<name>GUB_BACLI</name>
<gene>
    <name type="primary">bg1</name>
</gene>
<keyword id="KW-0002">3D-structure</keyword>
<keyword id="KW-1015">Disulfide bond</keyword>
<keyword id="KW-0326">Glycosidase</keyword>
<keyword id="KW-0378">Hydrolase</keyword>
<keyword id="KW-0732">Signal</keyword>
<accession>P27051</accession>
<proteinExistence type="evidence at protein level"/>
<organism>
    <name type="scientific">Bacillus licheniformis</name>
    <dbReference type="NCBI Taxonomy" id="1402"/>
    <lineage>
        <taxon>Bacteria</taxon>
        <taxon>Bacillati</taxon>
        <taxon>Bacillota</taxon>
        <taxon>Bacilli</taxon>
        <taxon>Bacillales</taxon>
        <taxon>Bacillaceae</taxon>
        <taxon>Bacillus</taxon>
    </lineage>
</organism>
<reference key="1">
    <citation type="journal article" date="1991" name="Eur. J. Biochem.">
        <title>Molecular cloning, expression and nucleotide sequence of the endo-beta-1,3-1,4-D-glucanase gene from Bacillus licheniformis. Predictive structural analyses of the encoded polypeptide.</title>
        <authorList>
            <person name="Lloberas J."/>
            <person name="Perez-Pons J.A."/>
            <person name="Querol E."/>
        </authorList>
    </citation>
    <scope>NUCLEOTIDE SEQUENCE [GENOMIC DNA]</scope>
</reference>
<reference key="2">
    <citation type="submission" date="1991-07" db="EMBL/GenBank/DDBJ databases">
        <authorList>
            <person name="Querol E."/>
        </authorList>
    </citation>
    <scope>SEQUENCE REVISION</scope>
</reference>
<reference key="3">
    <citation type="journal article" date="1992" name="FEBS Lett.">
        <title>Essential catalytic role of Glu134 in endo-beta-1,3-1,4-D-glucan 4-glucanohydrolase from B. licheniformis as determined by site-directed mutagenesis.</title>
        <authorList>
            <person name="Planas A."/>
            <person name="Juncosa M."/>
            <person name="Lloberas J."/>
            <person name="Querol E."/>
        </authorList>
    </citation>
    <scope>MUTAGENESIS</scope>
</reference>
<reference key="4">
    <citation type="journal article" date="1994" name="J. Biol. Chem.">
        <title>Identification of active site carboxylic residues in Bacillus licheniformis 1,3-1,4-beta-D-glucan 4-glucanohydrolase by site-directed mutagenesis.</title>
        <authorList>
            <person name="Juncosa M."/>
            <person name="Pons J."/>
            <person name="Dot T."/>
            <person name="Querol E."/>
            <person name="Planas A."/>
        </authorList>
    </citation>
    <scope>MUTAGENESIS</scope>
</reference>
<reference key="5">
    <citation type="journal article" date="1995" name="FEBS Lett.">
        <title>Crystal structure of Bacillus licheniformis 1,3-1,4-beta-D-glucan 4-glucanohydrolase at 1.8-A resolution.</title>
        <authorList>
            <person name="Hahn M."/>
            <person name="Pons J."/>
            <person name="Planas A."/>
            <person name="Querol E."/>
            <person name="Heinemann U."/>
        </authorList>
    </citation>
    <scope>X-RAY CRYSTALLOGRAPHY (1.8 ANGSTROMS)</scope>
    <scope>DISULFIDE BOND</scope>
</reference>
<comment type="catalytic activity">
    <reaction>
        <text>Hydrolysis of (1-&gt;4)-beta-D-glucosidic linkages in beta-D-glucans containing (1-&gt;3)- and (1-&gt;4)-bonds.</text>
        <dbReference type="EC" id="3.2.1.73"/>
    </reaction>
</comment>
<comment type="miscellaneous">
    <text>Beta-glucanases of Bacillus have a substrate range similar to lichenase of germinating barley.</text>
</comment>
<comment type="similarity">
    <text evidence="4">Belongs to the glycosyl hydrolase 16 family.</text>
</comment>
<sequence>MSYRVKRMLMLLVTGLFLSLSTFAASASAQTGGSFYEPFNNYNTGLWQKADGYSNGNMFNCTWRANNVSMTSLGEMRLSLTSPSYNKFDCGENRSVQTYGYGLYEVNMKPAKNVGIVSSFFTYTGPTDGTPWDEIDIEFLGKDTTKVQFNYYTNGVGNHEKIVNLGFDAANSYHTYAFDWQPNSIKWYVDGQLKHTATTQIPQTPGKIMMNLWNGAGVDEWLGSYNGVTPLSRSLHWVRYTKR</sequence>
<evidence type="ECO:0000255" key="1"/>
<evidence type="ECO:0000255" key="2">
    <source>
        <dbReference type="PROSITE-ProRule" id="PRU01098"/>
    </source>
</evidence>
<evidence type="ECO:0000269" key="3">
    <source>
    </source>
</evidence>
<evidence type="ECO:0000305" key="4"/>
<evidence type="ECO:0007829" key="5">
    <source>
        <dbReference type="PDB" id="1GBG"/>
    </source>
</evidence>